<evidence type="ECO:0000255" key="1">
    <source>
        <dbReference type="HAMAP-Rule" id="MF_01628"/>
    </source>
</evidence>
<sequence length="440" mass="47011">MFLAQEIIRKKRDGHALSDEEIRFFINGIRDNTISEGQIAALAMTIFFHDMSIPERVSLTMAMRDSGSVLDWKSLNLNGPIVDKHSTGGVGDVTSLMLGPMVAACGGYIPMISGRGLGHTGGTLDKLEAIPGFDIFPNDTRFREIIKDVGVAIIGQTSSLAPADKRFYATRDITATVDSIPLITASILAKKLAEGLDALVMDVKVGSGAFMPTFELSAALAEAIVGVSNGAGVRTTALLTDMNQVLASSAGNAVEVREAVQFLTGEYRNPRLFDVTMALCVEMLISGKLAKDDAEARAKLQAVLDNGKAAEIFGRMVAAQKGPNDFVENYAKYLPTAMLSKAVYADTEGFVSAMDTRALGMAVVSMGGGRRQASDTIDYSVGFTDMARLGDSVDGQRPLAVIHAKDENSWQEAAKAVKAAIQLDDKAPETTPTVYRRITD</sequence>
<reference key="1">
    <citation type="journal article" date="2010" name="PLoS Genet.">
        <title>Genome sequence of the plant growth promoting endophytic bacterium Enterobacter sp. 638.</title>
        <authorList>
            <person name="Taghavi S."/>
            <person name="van der Lelie D."/>
            <person name="Hoffman A."/>
            <person name="Zhang Y.B."/>
            <person name="Walla M.D."/>
            <person name="Vangronsveld J."/>
            <person name="Newman L."/>
            <person name="Monchy S."/>
        </authorList>
    </citation>
    <scope>NUCLEOTIDE SEQUENCE [LARGE SCALE GENOMIC DNA]</scope>
    <source>
        <strain>638</strain>
    </source>
</reference>
<dbReference type="EC" id="2.4.2.4" evidence="1"/>
<dbReference type="EMBL" id="CP000653">
    <property type="protein sequence ID" value="ABP59229.1"/>
    <property type="molecule type" value="Genomic_DNA"/>
</dbReference>
<dbReference type="RefSeq" id="WP_012015952.1">
    <property type="nucleotide sequence ID" value="NC_009436.1"/>
</dbReference>
<dbReference type="SMR" id="A4W699"/>
<dbReference type="STRING" id="399742.Ent638_0542"/>
<dbReference type="KEGG" id="ent:Ent638_0542"/>
<dbReference type="eggNOG" id="COG0213">
    <property type="taxonomic scope" value="Bacteria"/>
</dbReference>
<dbReference type="HOGENOM" id="CLU_025040_0_1_6"/>
<dbReference type="OrthoDB" id="9763887at2"/>
<dbReference type="UniPathway" id="UPA00578">
    <property type="reaction ID" value="UER00638"/>
</dbReference>
<dbReference type="Proteomes" id="UP000000230">
    <property type="component" value="Chromosome"/>
</dbReference>
<dbReference type="GO" id="GO:0005829">
    <property type="term" value="C:cytosol"/>
    <property type="evidence" value="ECO:0007669"/>
    <property type="project" value="TreeGrafter"/>
</dbReference>
<dbReference type="GO" id="GO:0004645">
    <property type="term" value="F:1,4-alpha-oligoglucan phosphorylase activity"/>
    <property type="evidence" value="ECO:0007669"/>
    <property type="project" value="InterPro"/>
</dbReference>
<dbReference type="GO" id="GO:0009032">
    <property type="term" value="F:thymidine phosphorylase activity"/>
    <property type="evidence" value="ECO:0007669"/>
    <property type="project" value="UniProtKB-UniRule"/>
</dbReference>
<dbReference type="GO" id="GO:0006206">
    <property type="term" value="P:pyrimidine nucleobase metabolic process"/>
    <property type="evidence" value="ECO:0007669"/>
    <property type="project" value="InterPro"/>
</dbReference>
<dbReference type="GO" id="GO:0046104">
    <property type="term" value="P:thymidine metabolic process"/>
    <property type="evidence" value="ECO:0007669"/>
    <property type="project" value="UniProtKB-UniRule"/>
</dbReference>
<dbReference type="FunFam" id="3.40.1030.10:FF:000001">
    <property type="entry name" value="Thymidine phosphorylase"/>
    <property type="match status" value="1"/>
</dbReference>
<dbReference type="FunFam" id="3.90.1170.30:FF:000001">
    <property type="entry name" value="Thymidine phosphorylase"/>
    <property type="match status" value="1"/>
</dbReference>
<dbReference type="Gene3D" id="3.40.1030.10">
    <property type="entry name" value="Nucleoside phosphorylase/phosphoribosyltransferase catalytic domain"/>
    <property type="match status" value="1"/>
</dbReference>
<dbReference type="Gene3D" id="3.90.1170.30">
    <property type="entry name" value="Pyrimidine nucleoside phosphorylase-like, C-terminal domain"/>
    <property type="match status" value="1"/>
</dbReference>
<dbReference type="Gene3D" id="1.20.970.10">
    <property type="entry name" value="Transferase, Pyrimidine Nucleoside Phosphorylase, Chain C"/>
    <property type="match status" value="1"/>
</dbReference>
<dbReference type="HAMAP" id="MF_01628">
    <property type="entry name" value="Thymid_phosp"/>
    <property type="match status" value="1"/>
</dbReference>
<dbReference type="InterPro" id="IPR000312">
    <property type="entry name" value="Glycosyl_Trfase_fam3"/>
</dbReference>
<dbReference type="InterPro" id="IPR017459">
    <property type="entry name" value="Glycosyl_Trfase_fam3_N_dom"/>
</dbReference>
<dbReference type="InterPro" id="IPR036320">
    <property type="entry name" value="Glycosyl_Trfase_fam3_N_dom_sf"/>
</dbReference>
<dbReference type="InterPro" id="IPR035902">
    <property type="entry name" value="Nuc_phospho_transferase"/>
</dbReference>
<dbReference type="InterPro" id="IPR036566">
    <property type="entry name" value="PYNP-like_C_sf"/>
</dbReference>
<dbReference type="InterPro" id="IPR013102">
    <property type="entry name" value="PYNP_C"/>
</dbReference>
<dbReference type="InterPro" id="IPR018090">
    <property type="entry name" value="Pyrmidine_PPas_bac/euk"/>
</dbReference>
<dbReference type="InterPro" id="IPR017872">
    <property type="entry name" value="Pyrmidine_PPase_CS"/>
</dbReference>
<dbReference type="InterPro" id="IPR000053">
    <property type="entry name" value="Thymidine/pyrmidine_PPase"/>
</dbReference>
<dbReference type="InterPro" id="IPR013465">
    <property type="entry name" value="Thymidine_Pase"/>
</dbReference>
<dbReference type="NCBIfam" id="NF004490">
    <property type="entry name" value="PRK05820.1"/>
    <property type="match status" value="1"/>
</dbReference>
<dbReference type="NCBIfam" id="TIGR02643">
    <property type="entry name" value="T_phosphoryl"/>
    <property type="match status" value="1"/>
</dbReference>
<dbReference type="NCBIfam" id="TIGR02644">
    <property type="entry name" value="Y_phosphoryl"/>
    <property type="match status" value="1"/>
</dbReference>
<dbReference type="PANTHER" id="PTHR10515">
    <property type="entry name" value="THYMIDINE PHOSPHORYLASE"/>
    <property type="match status" value="1"/>
</dbReference>
<dbReference type="PANTHER" id="PTHR10515:SF0">
    <property type="entry name" value="THYMIDINE PHOSPHORYLASE"/>
    <property type="match status" value="1"/>
</dbReference>
<dbReference type="Pfam" id="PF02885">
    <property type="entry name" value="Glycos_trans_3N"/>
    <property type="match status" value="1"/>
</dbReference>
<dbReference type="Pfam" id="PF00591">
    <property type="entry name" value="Glycos_transf_3"/>
    <property type="match status" value="1"/>
</dbReference>
<dbReference type="Pfam" id="PF07831">
    <property type="entry name" value="PYNP_C"/>
    <property type="match status" value="1"/>
</dbReference>
<dbReference type="PIRSF" id="PIRSF000478">
    <property type="entry name" value="TP_PyNP"/>
    <property type="match status" value="1"/>
</dbReference>
<dbReference type="SMART" id="SM00941">
    <property type="entry name" value="PYNP_C"/>
    <property type="match status" value="1"/>
</dbReference>
<dbReference type="SUPFAM" id="SSF52418">
    <property type="entry name" value="Nucleoside phosphorylase/phosphoribosyltransferase catalytic domain"/>
    <property type="match status" value="1"/>
</dbReference>
<dbReference type="SUPFAM" id="SSF47648">
    <property type="entry name" value="Nucleoside phosphorylase/phosphoribosyltransferase N-terminal domain"/>
    <property type="match status" value="1"/>
</dbReference>
<dbReference type="SUPFAM" id="SSF54680">
    <property type="entry name" value="Pyrimidine nucleoside phosphorylase C-terminal domain"/>
    <property type="match status" value="1"/>
</dbReference>
<dbReference type="PROSITE" id="PS00647">
    <property type="entry name" value="THYMID_PHOSPHORYLASE"/>
    <property type="match status" value="1"/>
</dbReference>
<keyword id="KW-0328">Glycosyltransferase</keyword>
<keyword id="KW-0808">Transferase</keyword>
<protein>
    <recommendedName>
        <fullName evidence="1">Thymidine phosphorylase</fullName>
        <ecNumber evidence="1">2.4.2.4</ecNumber>
    </recommendedName>
    <alternativeName>
        <fullName evidence="1">TdRPase</fullName>
    </alternativeName>
</protein>
<name>TYPH_ENT38</name>
<accession>A4W699</accession>
<proteinExistence type="inferred from homology"/>
<gene>
    <name evidence="1" type="primary">deoA</name>
    <name type="ordered locus">Ent638_0542</name>
</gene>
<comment type="function">
    <text evidence="1">The enzymes which catalyze the reversible phosphorolysis of pyrimidine nucleosides are involved in the degradation of these compounds and in their utilization as carbon and energy sources, or in the rescue of pyrimidine bases for nucleotide synthesis.</text>
</comment>
<comment type="catalytic activity">
    <reaction evidence="1">
        <text>thymidine + phosphate = 2-deoxy-alpha-D-ribose 1-phosphate + thymine</text>
        <dbReference type="Rhea" id="RHEA:16037"/>
        <dbReference type="ChEBI" id="CHEBI:17748"/>
        <dbReference type="ChEBI" id="CHEBI:17821"/>
        <dbReference type="ChEBI" id="CHEBI:43474"/>
        <dbReference type="ChEBI" id="CHEBI:57259"/>
        <dbReference type="EC" id="2.4.2.4"/>
    </reaction>
</comment>
<comment type="pathway">
    <text evidence="1">Pyrimidine metabolism; dTMP biosynthesis via salvage pathway; dTMP from thymine: step 1/2.</text>
</comment>
<comment type="subunit">
    <text evidence="1">Homodimer.</text>
</comment>
<comment type="similarity">
    <text evidence="1">Belongs to the thymidine/pyrimidine-nucleoside phosphorylase family.</text>
</comment>
<organism>
    <name type="scientific">Enterobacter sp. (strain 638)</name>
    <dbReference type="NCBI Taxonomy" id="399742"/>
    <lineage>
        <taxon>Bacteria</taxon>
        <taxon>Pseudomonadati</taxon>
        <taxon>Pseudomonadota</taxon>
        <taxon>Gammaproteobacteria</taxon>
        <taxon>Enterobacterales</taxon>
        <taxon>Enterobacteriaceae</taxon>
        <taxon>Enterobacter</taxon>
    </lineage>
</organism>
<feature type="chain" id="PRO_1000069661" description="Thymidine phosphorylase">
    <location>
        <begin position="1"/>
        <end position="440"/>
    </location>
</feature>